<evidence type="ECO:0000255" key="1">
    <source>
        <dbReference type="HAMAP-Rule" id="MF_01039"/>
    </source>
</evidence>
<reference key="1">
    <citation type="journal article" date="2008" name="J. Biotechnol.">
        <title>The genome of Xanthomonas campestris pv. campestris B100 and its use for the reconstruction of metabolic pathways involved in xanthan biosynthesis.</title>
        <authorList>
            <person name="Vorhoelter F.-J."/>
            <person name="Schneiker S."/>
            <person name="Goesmann A."/>
            <person name="Krause L."/>
            <person name="Bekel T."/>
            <person name="Kaiser O."/>
            <person name="Linke B."/>
            <person name="Patschkowski T."/>
            <person name="Rueckert C."/>
            <person name="Schmid J."/>
            <person name="Sidhu V.K."/>
            <person name="Sieber V."/>
            <person name="Tauch A."/>
            <person name="Watt S.A."/>
            <person name="Weisshaar B."/>
            <person name="Becker A."/>
            <person name="Niehaus K."/>
            <person name="Puehler A."/>
        </authorList>
    </citation>
    <scope>NUCLEOTIDE SEQUENCE [LARGE SCALE GENOMIC DNA]</scope>
    <source>
        <strain>B100</strain>
    </source>
</reference>
<proteinExistence type="inferred from homology"/>
<sequence>MTRKLVLLRHGQSQWNLDNRFTGWVDVDLTEQGRQEAAAAGKLMKDEGLQFDVAYTSVLKRAIHTLQGALKELDQDWLPVHKSWRLNERHYGGLQGLDKAETAAKHGEEQVKIWRRSYDIPPPAMDVTDPGHPGHDRRYATLDRNALPGTESLATTLVRVLPYWHDAIAPQLKAGQTVLVTAHGNSLRALYKYLNDISNAQILELNIPTGIPLLFELDDNLRVQSYRYLGDPEAAKRAAEAVANQGKAK</sequence>
<dbReference type="EC" id="5.4.2.11" evidence="1"/>
<dbReference type="EMBL" id="AM920689">
    <property type="protein sequence ID" value="CAP50802.1"/>
    <property type="molecule type" value="Genomic_DNA"/>
</dbReference>
<dbReference type="SMR" id="B0RQR7"/>
<dbReference type="KEGG" id="xca:xcc-b100_1452"/>
<dbReference type="HOGENOM" id="CLU_033323_1_1_6"/>
<dbReference type="UniPathway" id="UPA00109">
    <property type="reaction ID" value="UER00186"/>
</dbReference>
<dbReference type="Proteomes" id="UP000001188">
    <property type="component" value="Chromosome"/>
</dbReference>
<dbReference type="GO" id="GO:0004619">
    <property type="term" value="F:phosphoglycerate mutase activity"/>
    <property type="evidence" value="ECO:0007669"/>
    <property type="project" value="UniProtKB-EC"/>
</dbReference>
<dbReference type="GO" id="GO:0006094">
    <property type="term" value="P:gluconeogenesis"/>
    <property type="evidence" value="ECO:0007669"/>
    <property type="project" value="UniProtKB-UniRule"/>
</dbReference>
<dbReference type="GO" id="GO:0006096">
    <property type="term" value="P:glycolytic process"/>
    <property type="evidence" value="ECO:0007669"/>
    <property type="project" value="UniProtKB-UniRule"/>
</dbReference>
<dbReference type="CDD" id="cd07067">
    <property type="entry name" value="HP_PGM_like"/>
    <property type="match status" value="1"/>
</dbReference>
<dbReference type="FunFam" id="3.40.50.1240:FF:000003">
    <property type="entry name" value="2,3-bisphosphoglycerate-dependent phosphoglycerate mutase"/>
    <property type="match status" value="1"/>
</dbReference>
<dbReference type="Gene3D" id="3.40.50.1240">
    <property type="entry name" value="Phosphoglycerate mutase-like"/>
    <property type="match status" value="1"/>
</dbReference>
<dbReference type="HAMAP" id="MF_01039">
    <property type="entry name" value="PGAM_GpmA"/>
    <property type="match status" value="1"/>
</dbReference>
<dbReference type="InterPro" id="IPR013078">
    <property type="entry name" value="His_Pase_superF_clade-1"/>
</dbReference>
<dbReference type="InterPro" id="IPR029033">
    <property type="entry name" value="His_PPase_superfam"/>
</dbReference>
<dbReference type="InterPro" id="IPR001345">
    <property type="entry name" value="PG/BPGM_mutase_AS"/>
</dbReference>
<dbReference type="InterPro" id="IPR005952">
    <property type="entry name" value="Phosphogly_mut1"/>
</dbReference>
<dbReference type="NCBIfam" id="TIGR01258">
    <property type="entry name" value="pgm_1"/>
    <property type="match status" value="1"/>
</dbReference>
<dbReference type="NCBIfam" id="NF010713">
    <property type="entry name" value="PRK14115.1"/>
    <property type="match status" value="1"/>
</dbReference>
<dbReference type="PANTHER" id="PTHR11931">
    <property type="entry name" value="PHOSPHOGLYCERATE MUTASE"/>
    <property type="match status" value="1"/>
</dbReference>
<dbReference type="Pfam" id="PF00300">
    <property type="entry name" value="His_Phos_1"/>
    <property type="match status" value="2"/>
</dbReference>
<dbReference type="PIRSF" id="PIRSF000709">
    <property type="entry name" value="6PFK_2-Ptase"/>
    <property type="match status" value="1"/>
</dbReference>
<dbReference type="SMART" id="SM00855">
    <property type="entry name" value="PGAM"/>
    <property type="match status" value="1"/>
</dbReference>
<dbReference type="SUPFAM" id="SSF53254">
    <property type="entry name" value="Phosphoglycerate mutase-like"/>
    <property type="match status" value="1"/>
</dbReference>
<dbReference type="PROSITE" id="PS00175">
    <property type="entry name" value="PG_MUTASE"/>
    <property type="match status" value="1"/>
</dbReference>
<feature type="chain" id="PRO_1000135991" description="2,3-bisphosphoglycerate-dependent phosphoglycerate mutase">
    <location>
        <begin position="1"/>
        <end position="249"/>
    </location>
</feature>
<feature type="active site" description="Tele-phosphohistidine intermediate" evidence="1">
    <location>
        <position position="10"/>
    </location>
</feature>
<feature type="active site" description="Proton donor/acceptor" evidence="1">
    <location>
        <position position="88"/>
    </location>
</feature>
<feature type="binding site" evidence="1">
    <location>
        <begin position="9"/>
        <end position="16"/>
    </location>
    <ligand>
        <name>substrate</name>
    </ligand>
</feature>
<feature type="binding site" evidence="1">
    <location>
        <begin position="22"/>
        <end position="23"/>
    </location>
    <ligand>
        <name>substrate</name>
    </ligand>
</feature>
<feature type="binding site" evidence="1">
    <location>
        <position position="61"/>
    </location>
    <ligand>
        <name>substrate</name>
    </ligand>
</feature>
<feature type="binding site" evidence="1">
    <location>
        <begin position="88"/>
        <end position="91"/>
    </location>
    <ligand>
        <name>substrate</name>
    </ligand>
</feature>
<feature type="binding site" evidence="1">
    <location>
        <position position="99"/>
    </location>
    <ligand>
        <name>substrate</name>
    </ligand>
</feature>
<feature type="binding site" evidence="1">
    <location>
        <begin position="115"/>
        <end position="116"/>
    </location>
    <ligand>
        <name>substrate</name>
    </ligand>
</feature>
<feature type="binding site" evidence="1">
    <location>
        <begin position="184"/>
        <end position="185"/>
    </location>
    <ligand>
        <name>substrate</name>
    </ligand>
</feature>
<feature type="site" description="Transition state stabilizer" evidence="1">
    <location>
        <position position="183"/>
    </location>
</feature>
<keyword id="KW-0312">Gluconeogenesis</keyword>
<keyword id="KW-0324">Glycolysis</keyword>
<keyword id="KW-0413">Isomerase</keyword>
<protein>
    <recommendedName>
        <fullName evidence="1">2,3-bisphosphoglycerate-dependent phosphoglycerate mutase</fullName>
        <shortName evidence="1">BPG-dependent PGAM</shortName>
        <shortName evidence="1">PGAM</shortName>
        <shortName evidence="1">Phosphoglyceromutase</shortName>
        <shortName evidence="1">dPGM</shortName>
        <ecNumber evidence="1">5.4.2.11</ecNumber>
    </recommendedName>
</protein>
<name>GPMA_XANCB</name>
<organism>
    <name type="scientific">Xanthomonas campestris pv. campestris (strain B100)</name>
    <dbReference type="NCBI Taxonomy" id="509169"/>
    <lineage>
        <taxon>Bacteria</taxon>
        <taxon>Pseudomonadati</taxon>
        <taxon>Pseudomonadota</taxon>
        <taxon>Gammaproteobacteria</taxon>
        <taxon>Lysobacterales</taxon>
        <taxon>Lysobacteraceae</taxon>
        <taxon>Xanthomonas</taxon>
    </lineage>
</organism>
<comment type="function">
    <text evidence="1">Catalyzes the interconversion of 2-phosphoglycerate and 3-phosphoglycerate.</text>
</comment>
<comment type="catalytic activity">
    <reaction evidence="1">
        <text>(2R)-2-phosphoglycerate = (2R)-3-phosphoglycerate</text>
        <dbReference type="Rhea" id="RHEA:15901"/>
        <dbReference type="ChEBI" id="CHEBI:58272"/>
        <dbReference type="ChEBI" id="CHEBI:58289"/>
        <dbReference type="EC" id="5.4.2.11"/>
    </reaction>
</comment>
<comment type="pathway">
    <text evidence="1">Carbohydrate degradation; glycolysis; pyruvate from D-glyceraldehyde 3-phosphate: step 3/5.</text>
</comment>
<comment type="subunit">
    <text evidence="1">Homodimer.</text>
</comment>
<comment type="similarity">
    <text evidence="1">Belongs to the phosphoglycerate mutase family. BPG-dependent PGAM subfamily.</text>
</comment>
<gene>
    <name evidence="1" type="primary">gpmA</name>
    <name type="ordered locus">xcc-b100_1452</name>
</gene>
<accession>B0RQR7</accession>